<reference key="1">
    <citation type="journal article" date="1993" name="J. Biol. Chem.">
        <title>Purification, characterization, and biosynthesis of margatoxin, a component of Centruroides margaritatus venom that selectively inhibits voltage-dependent potassium channels.</title>
        <authorList>
            <person name="Garcia-Calvo M."/>
            <person name="Leonard R.J."/>
            <person name="Novick J."/>
            <person name="Stevens S.P."/>
            <person name="Schmalhofer W."/>
            <person name="Kaczorowski G.J."/>
            <person name="Garcia M.L."/>
        </authorList>
    </citation>
    <scope>PROTEIN SEQUENCE</scope>
    <scope>FUNCTION</scope>
    <scope>SUBCELLULAR LOCATION</scope>
    <source>
        <tissue>Venom</tissue>
    </source>
</reference>
<reference key="2">
    <citation type="journal article" date="1994" name="Biochem. Biophys. Res. Commun.">
        <title>Chemical synthesis and structure-function studies of margatoxin, a potent inhibitor of voltage-dependent potassium channel in human T lymphocytes.</title>
        <authorList>
            <person name="Bednarek M.A."/>
            <person name="Bugianesi R.M."/>
            <person name="Leonard R.J."/>
            <person name="Felix J.P."/>
        </authorList>
    </citation>
    <scope>SYNTHESIS</scope>
    <scope>DISULFIDE BONDS</scope>
</reference>
<reference key="3">
    <citation type="journal article" date="1998" name="J. Biol. Chem.">
        <title>Subunit composition of brain voltage-gated potassium channels determined by hongotoxin-1, a novel peptide derived from Centruroides limbatus venom.</title>
        <authorList>
            <person name="Koschak A."/>
            <person name="Bugianesi R.M."/>
            <person name="Mitterdorfer J."/>
            <person name="Kaczorowski G.J."/>
            <person name="Garcia M.L."/>
            <person name="Knaus H.-G."/>
        </authorList>
    </citation>
    <scope>FUNCTION</scope>
    <scope>ACTIVITY PROFILE</scope>
</reference>
<reference key="4">
    <citation type="journal article" date="2021" name="J. Biol. Chem.">
        <title>Anti-inflammatory effects of FS48, the first potassium channel inhibitor from the salivary glands of the flea Xenopsylla cheopis.</title>
        <authorList>
            <person name="Deng Z."/>
            <person name="Zeng Q."/>
            <person name="Tang J."/>
            <person name="Zhang B."/>
            <person name="Chai J."/>
            <person name="Andersen J.F."/>
            <person name="Chen X."/>
            <person name="Xu X."/>
        </authorList>
    </citation>
    <scope>FUNCTION</scope>
</reference>
<reference evidence="9" key="5">
    <citation type="journal article" date="2022" name="J. Biol. Chem.">
        <title>The toxin mimic FS48 from the salivary gland of Xenopsylla cheopis functions as a Kv1.3 channel-blocking immunomodulator of T cell activation.</title>
        <authorList>
            <person name="Zeng Q."/>
            <person name="Lu W."/>
            <person name="Deng Z."/>
            <person name="Zhang B."/>
            <person name="Wu J."/>
            <person name="Chai J."/>
            <person name="Chen X."/>
            <person name="Xu X."/>
        </authorList>
    </citation>
    <scope>FUNCTION</scope>
</reference>
<reference key="6">
    <citation type="journal article" date="1994" name="Biochemistry">
        <title>Determination of the three-dimensional structure of margatoxin by 1H, 13C, 15N triple-resonance nuclear magnetic resonance spectroscopy.</title>
        <authorList>
            <person name="Johnson B.A."/>
            <person name="Stevens S.P."/>
            <person name="Williamson J.M."/>
        </authorList>
    </citation>
    <scope>STRUCTURE BY NMR</scope>
    <scope>DISULFIDE BONDS</scope>
</reference>
<name>KAX22_CENMA</name>
<dbReference type="PIR" id="A48523">
    <property type="entry name" value="A48523"/>
</dbReference>
<dbReference type="PDB" id="1MTX">
    <property type="method" value="NMR"/>
    <property type="chains" value="A=1-39"/>
</dbReference>
<dbReference type="PDBsum" id="1MTX"/>
<dbReference type="BMRB" id="P40755"/>
<dbReference type="SMR" id="P40755"/>
<dbReference type="TCDB" id="8.B.8.1.3">
    <property type="family name" value="the Alpha-ktx15 scorpion toxin (Alpha-ktx15) family"/>
</dbReference>
<dbReference type="EvolutionaryTrace" id="P40755"/>
<dbReference type="GO" id="GO:0005576">
    <property type="term" value="C:extracellular region"/>
    <property type="evidence" value="ECO:0007669"/>
    <property type="project" value="UniProtKB-SubCell"/>
</dbReference>
<dbReference type="GO" id="GO:0008200">
    <property type="term" value="F:ion channel inhibitor activity"/>
    <property type="evidence" value="ECO:0007669"/>
    <property type="project" value="InterPro"/>
</dbReference>
<dbReference type="GO" id="GO:0015459">
    <property type="term" value="F:potassium channel regulator activity"/>
    <property type="evidence" value="ECO:0007669"/>
    <property type="project" value="UniProtKB-KW"/>
</dbReference>
<dbReference type="GO" id="GO:0090729">
    <property type="term" value="F:toxin activity"/>
    <property type="evidence" value="ECO:0007669"/>
    <property type="project" value="UniProtKB-KW"/>
</dbReference>
<dbReference type="FunFam" id="3.30.30.10:FF:000009">
    <property type="entry name" value="Potassium channel toxin alpha-KTx 4.3"/>
    <property type="match status" value="1"/>
</dbReference>
<dbReference type="Gene3D" id="3.30.30.10">
    <property type="entry name" value="Knottin, scorpion toxin-like"/>
    <property type="match status" value="1"/>
</dbReference>
<dbReference type="InterPro" id="IPR036574">
    <property type="entry name" value="Scorpion_toxin-like_sf"/>
</dbReference>
<dbReference type="InterPro" id="IPR001947">
    <property type="entry name" value="Scorpion_toxinS_K_inh"/>
</dbReference>
<dbReference type="Pfam" id="PF00451">
    <property type="entry name" value="Toxin_2"/>
    <property type="match status" value="1"/>
</dbReference>
<dbReference type="PRINTS" id="PR00286">
    <property type="entry name" value="CHARYBDTOXIN"/>
</dbReference>
<dbReference type="SUPFAM" id="SSF57095">
    <property type="entry name" value="Scorpion toxin-like"/>
    <property type="match status" value="1"/>
</dbReference>
<dbReference type="PROSITE" id="PS01138">
    <property type="entry name" value="SCORP_SHORT_TOXIN"/>
    <property type="match status" value="1"/>
</dbReference>
<protein>
    <recommendedName>
        <fullName>Potassium channel toxin alpha-KTx 2.2</fullName>
    </recommendedName>
    <alternativeName>
        <fullName evidence="8">Margatoxin</fullName>
        <shortName evidence="7 8">MgTX</shortName>
    </alternativeName>
</protein>
<proteinExistence type="evidence at protein level"/>
<evidence type="ECO:0000250" key="1"/>
<evidence type="ECO:0000255" key="2"/>
<evidence type="ECO:0000269" key="3">
    <source>
    </source>
</evidence>
<evidence type="ECO:0000269" key="4">
    <source>
    </source>
</evidence>
<evidence type="ECO:0000269" key="5">
    <source>
    </source>
</evidence>
<evidence type="ECO:0000269" key="6">
    <source>
    </source>
</evidence>
<evidence type="ECO:0000303" key="7">
    <source>
    </source>
</evidence>
<evidence type="ECO:0000303" key="8">
    <source>
    </source>
</evidence>
<evidence type="ECO:0000305" key="9"/>
<evidence type="ECO:0000305" key="10">
    <source>
    </source>
</evidence>
<evidence type="ECO:0007829" key="11">
    <source>
        <dbReference type="PDB" id="1MTX"/>
    </source>
</evidence>
<comment type="function">
    <text evidence="3 4 6">Potent inhibitor of voltage-gated potassium channels such as Kv1.1/KCNA1 (IC(50)=0.144 nM), Kv1.2/KCNA2 (IC(50)=0.675 nM), Kv1.3/KCNA3 (IC(50)=0.23 nM) and Shaker (Kd=160 nM) (PubMed:33864815, PubMed:34919963, PubMed:8360176). Suppresses expression of the Kv1.3/KCNA3 channel in lipopolysaccharide (LPS)-stimulated mouse macrophages (PubMed:33864815). Down-regulates secretion of nitric oxide (NO) and inflammatory cytokines, such as TNF-alpha/TNF, IL-1beta/IL1B and IL6, in LPS-stimulated mouse macrophages in a manner dependent on Kv1.3/KCNA3 channel blockage (PubMed:33864815). Reduces activation of MAPK and NF-kappa-B signaling pathways in LPS-stimulated mouse macrophages (PubMed:33864815). Modulates intracellular Ca(2+) signaling in human PMA/ionomycin-triggered T-cells (PubMed:34919963). Interferes with the activation of the MAPK, NF-kappa-B and NFATc1 pathways in human PMA/ionomycin-triggered T-cells (PubMed:34919963). Reduces proliferation of human PMA/ionomycin-triggered T-cells (PubMed:34919963). Down-regulates secretion of cytokines, such as TNF-alpha/TNF and IL2, in human PMA/ionomycin-triggered T-cells (PubMed:34919963).</text>
</comment>
<comment type="subcellular location">
    <subcellularLocation>
        <location evidence="6">Secreted</location>
    </subcellularLocation>
</comment>
<comment type="tissue specificity">
    <text evidence="10">Expressed by the venom gland.</text>
</comment>
<comment type="domain">
    <text evidence="5">Has the structural arrangement of an alpha-helix connected to a beta-sheet by disulfide bonds (CSalpha/beta).</text>
</comment>
<comment type="similarity">
    <text evidence="9">Belongs to the short scorpion toxin superfamily. Potassium channel inhibitor family. Alpha-KTx 02 subfamily.</text>
</comment>
<sequence length="39" mass="4185">TIINVKCTSPKQCLPPCKAQFGQSAGAKCMNGKCKCYPH</sequence>
<organism>
    <name type="scientific">Centruroides margaritatus</name>
    <name type="common">Central American bark Scorpion</name>
    <dbReference type="NCBI Taxonomy" id="29018"/>
    <lineage>
        <taxon>Eukaryota</taxon>
        <taxon>Metazoa</taxon>
        <taxon>Ecdysozoa</taxon>
        <taxon>Arthropoda</taxon>
        <taxon>Chelicerata</taxon>
        <taxon>Arachnida</taxon>
        <taxon>Scorpiones</taxon>
        <taxon>Buthida</taxon>
        <taxon>Buthoidea</taxon>
        <taxon>Buthidae</taxon>
        <taxon>Centruroides</taxon>
    </lineage>
</organism>
<keyword id="KW-0002">3D-structure</keyword>
<keyword id="KW-0903">Direct protein sequencing</keyword>
<keyword id="KW-1015">Disulfide bond</keyword>
<keyword id="KW-0872">Ion channel impairing toxin</keyword>
<keyword id="KW-0528">Neurotoxin</keyword>
<keyword id="KW-0632">Potassium channel impairing toxin</keyword>
<keyword id="KW-0964">Secreted</keyword>
<keyword id="KW-0800">Toxin</keyword>
<keyword id="KW-1220">Voltage-gated potassium channel impairing toxin</keyword>
<feature type="peptide" id="PRO_0000044904" description="Potassium channel toxin alpha-KTx 2.2" evidence="6">
    <location>
        <begin position="1"/>
        <end position="39"/>
    </location>
</feature>
<feature type="region of interest" description="Interaction with Kv1.3 channels" evidence="2">
    <location>
        <begin position="37"/>
        <end position="39"/>
    </location>
</feature>
<feature type="site" description="Basic residue of the functional dyad" evidence="1">
    <location>
        <position position="28"/>
    </location>
</feature>
<feature type="site" description="Aromatic residue of the functional dyad" evidence="1">
    <location>
        <position position="37"/>
    </location>
</feature>
<feature type="disulfide bond" evidence="5">
    <location>
        <begin position="7"/>
        <end position="29"/>
    </location>
</feature>
<feature type="disulfide bond" evidence="5">
    <location>
        <begin position="13"/>
        <end position="34"/>
    </location>
</feature>
<feature type="disulfide bond" evidence="5">
    <location>
        <begin position="17"/>
        <end position="36"/>
    </location>
</feature>
<feature type="helix" evidence="11">
    <location>
        <begin position="10"/>
        <end position="13"/>
    </location>
</feature>
<feature type="helix" evidence="11">
    <location>
        <begin position="14"/>
        <end position="20"/>
    </location>
</feature>
<feature type="strand" evidence="11">
    <location>
        <begin position="26"/>
        <end position="30"/>
    </location>
</feature>
<feature type="strand" evidence="11">
    <location>
        <begin position="33"/>
        <end position="37"/>
    </location>
</feature>
<accession>P40755</accession>